<proteinExistence type="inferred from homology"/>
<comment type="similarity">
    <text evidence="1">Belongs to the eukaryotic ribosomal protein eL32 family.</text>
</comment>
<reference key="1">
    <citation type="journal article" date="2000" name="Proc. Natl. Acad. Sci. U.S.A.">
        <title>Archaeal adaptation to higher temperatures revealed by genomic sequence of Thermoplasma volcanium.</title>
        <authorList>
            <person name="Kawashima T."/>
            <person name="Amano N."/>
            <person name="Koike H."/>
            <person name="Makino S."/>
            <person name="Higuchi S."/>
            <person name="Kawashima-Ohya Y."/>
            <person name="Watanabe K."/>
            <person name="Yamazaki M."/>
            <person name="Kanehori K."/>
            <person name="Kawamoto T."/>
            <person name="Nunoshiba T."/>
            <person name="Yamamoto Y."/>
            <person name="Aramaki H."/>
            <person name="Makino K."/>
            <person name="Suzuki M."/>
        </authorList>
    </citation>
    <scope>NUCLEOTIDE SEQUENCE [LARGE SCALE GENOMIC DNA]</scope>
    <source>
        <strain>ATCC 51530 / DSM 4299 / JCM 9571 / NBRC 15438 / GSS1</strain>
    </source>
</reference>
<keyword id="KW-0687">Ribonucleoprotein</keyword>
<keyword id="KW-0689">Ribosomal protein</keyword>
<protein>
    <recommendedName>
        <fullName evidence="1">Large ribosomal subunit protein eL32</fullName>
    </recommendedName>
    <alternativeName>
        <fullName>50S ribosomal protein L32e</fullName>
    </alternativeName>
</protein>
<sequence>MNRALDDEVRRLLKIKNYMARKRVEFHRQEWFRYKKLGDAWRKPRGKHSKLREHLSRRPPIVDAGFRSPAKVRGMHPSGYYEVLVYNLKDIENIDPKIQAARIASSVGSRKREEIAKRCAELNIKVLN</sequence>
<evidence type="ECO:0000305" key="1"/>
<dbReference type="EMBL" id="BA000011">
    <property type="protein sequence ID" value="BAB59488.1"/>
    <property type="molecule type" value="Genomic_DNA"/>
</dbReference>
<dbReference type="RefSeq" id="WP_010916600.1">
    <property type="nucleotide sequence ID" value="NC_002689.2"/>
</dbReference>
<dbReference type="SMR" id="Q97BV9"/>
<dbReference type="STRING" id="273116.gene:9381123"/>
<dbReference type="PaxDb" id="273116-14324561"/>
<dbReference type="GeneID" id="1440858"/>
<dbReference type="KEGG" id="tvo:TVG0341099"/>
<dbReference type="eggNOG" id="arCOG00781">
    <property type="taxonomic scope" value="Archaea"/>
</dbReference>
<dbReference type="HOGENOM" id="CLU_071479_3_1_2"/>
<dbReference type="OrthoDB" id="372100at2157"/>
<dbReference type="PhylomeDB" id="Q97BV9"/>
<dbReference type="Proteomes" id="UP000001017">
    <property type="component" value="Chromosome"/>
</dbReference>
<dbReference type="GO" id="GO:0022625">
    <property type="term" value="C:cytosolic large ribosomal subunit"/>
    <property type="evidence" value="ECO:0007669"/>
    <property type="project" value="TreeGrafter"/>
</dbReference>
<dbReference type="GO" id="GO:0003735">
    <property type="term" value="F:structural constituent of ribosome"/>
    <property type="evidence" value="ECO:0007669"/>
    <property type="project" value="InterPro"/>
</dbReference>
<dbReference type="GO" id="GO:0006412">
    <property type="term" value="P:translation"/>
    <property type="evidence" value="ECO:0007669"/>
    <property type="project" value="UniProtKB-UniRule"/>
</dbReference>
<dbReference type="CDD" id="cd00513">
    <property type="entry name" value="Ribosomal_L32_L32e"/>
    <property type="match status" value="1"/>
</dbReference>
<dbReference type="HAMAP" id="MF_00810">
    <property type="entry name" value="Ribosomal_eL32"/>
    <property type="match status" value="1"/>
</dbReference>
<dbReference type="InterPro" id="IPR001515">
    <property type="entry name" value="Ribosomal_eL32"/>
</dbReference>
<dbReference type="InterPro" id="IPR023654">
    <property type="entry name" value="Ribosomal_eL32_arc"/>
</dbReference>
<dbReference type="InterPro" id="IPR018263">
    <property type="entry name" value="Ribosomal_eL32_CS"/>
</dbReference>
<dbReference type="InterPro" id="IPR036351">
    <property type="entry name" value="Ribosomal_eL32_sf"/>
</dbReference>
<dbReference type="NCBIfam" id="NF006332">
    <property type="entry name" value="PRK08562.1"/>
    <property type="match status" value="1"/>
</dbReference>
<dbReference type="PANTHER" id="PTHR23413">
    <property type="entry name" value="60S RIBOSOMAL PROTEIN L32 AND DNA-DIRECTED RNA POLYMERASE II, SUBUNIT N"/>
    <property type="match status" value="1"/>
</dbReference>
<dbReference type="PANTHER" id="PTHR23413:SF1">
    <property type="entry name" value="RIBOSOMAL PROTEIN L32"/>
    <property type="match status" value="1"/>
</dbReference>
<dbReference type="Pfam" id="PF01655">
    <property type="entry name" value="Ribosomal_L32e"/>
    <property type="match status" value="1"/>
</dbReference>
<dbReference type="SMART" id="SM01393">
    <property type="entry name" value="Ribosomal_L32e"/>
    <property type="match status" value="1"/>
</dbReference>
<dbReference type="SUPFAM" id="SSF52042">
    <property type="entry name" value="Ribosomal protein L32e"/>
    <property type="match status" value="1"/>
</dbReference>
<dbReference type="PROSITE" id="PS00580">
    <property type="entry name" value="RIBOSOMAL_L32E"/>
    <property type="match status" value="1"/>
</dbReference>
<accession>Q97BV9</accession>
<organism>
    <name type="scientific">Thermoplasma volcanium (strain ATCC 51530 / DSM 4299 / JCM 9571 / NBRC 15438 / GSS1)</name>
    <dbReference type="NCBI Taxonomy" id="273116"/>
    <lineage>
        <taxon>Archaea</taxon>
        <taxon>Methanobacteriati</taxon>
        <taxon>Thermoplasmatota</taxon>
        <taxon>Thermoplasmata</taxon>
        <taxon>Thermoplasmatales</taxon>
        <taxon>Thermoplasmataceae</taxon>
        <taxon>Thermoplasma</taxon>
    </lineage>
</organism>
<name>RL32_THEVO</name>
<feature type="chain" id="PRO_0000131168" description="Large ribosomal subunit protein eL32">
    <location>
        <begin position="1"/>
        <end position="128"/>
    </location>
</feature>
<gene>
    <name type="primary">rpl32e</name>
    <name type="ordered locus">TV0346</name>
    <name type="ORF">TVG0341099</name>
</gene>